<feature type="chain" id="PRO_0000337097" description="Bifunctional methylenetetrahydrofolate dehydrogenase/cyclohydrolase 2, mitochondrial">
    <location>
        <begin position="1"/>
        <end position="347"/>
    </location>
</feature>
<feature type="binding site" evidence="2">
    <location>
        <begin position="98"/>
        <end position="102"/>
    </location>
    <ligand>
        <name>substrate</name>
    </ligand>
</feature>
<feature type="binding site" evidence="2">
    <location>
        <begin position="145"/>
        <end position="147"/>
    </location>
    <ligand>
        <name>substrate</name>
    </ligand>
</feature>
<feature type="binding site" evidence="2">
    <location>
        <begin position="214"/>
        <end position="216"/>
    </location>
    <ligand>
        <name>NAD(+)</name>
        <dbReference type="ChEBI" id="CHEBI:57540"/>
    </ligand>
</feature>
<feature type="binding site" evidence="2">
    <location>
        <position position="247"/>
    </location>
    <ligand>
        <name>NAD(+)</name>
        <dbReference type="ChEBI" id="CHEBI:57540"/>
    </ligand>
</feature>
<feature type="binding site" evidence="2">
    <location>
        <begin position="323"/>
        <end position="327"/>
    </location>
    <ligand>
        <name>substrate</name>
    </ligand>
</feature>
<feature type="splice variant" id="VSP_041877" description="In isoform 2." evidence="5">
    <location>
        <begin position="1"/>
        <end position="277"/>
    </location>
</feature>
<feature type="splice variant" id="VSP_041878" description="In isoform 1 and isoform 3." evidence="4 5">
    <location>
        <begin position="1"/>
        <end position="58"/>
    </location>
</feature>
<feature type="splice variant" id="VSP_041879" description="In isoform 5." evidence="7">
    <location>
        <begin position="269"/>
        <end position="310"/>
    </location>
</feature>
<feature type="splice variant" id="VSP_041880" description="In isoform 3." evidence="5">
    <original>GIPKLITSDMVKE</original>
    <variation>ERFHHFAQDLSNS</variation>
    <location>
        <begin position="269"/>
        <end position="281"/>
    </location>
</feature>
<feature type="splice variant" id="VSP_041881" description="In isoform 3." evidence="5">
    <location>
        <begin position="282"/>
        <end position="347"/>
    </location>
</feature>
<feature type="helix" evidence="10">
    <location>
        <begin position="56"/>
        <end position="76"/>
    </location>
</feature>
<feature type="strand" evidence="10">
    <location>
        <begin position="83"/>
        <end position="90"/>
    </location>
</feature>
<feature type="helix" evidence="10">
    <location>
        <begin position="93"/>
        <end position="108"/>
    </location>
</feature>
<feature type="strand" evidence="10">
    <location>
        <begin position="112"/>
        <end position="118"/>
    </location>
</feature>
<feature type="helix" evidence="10">
    <location>
        <begin position="124"/>
        <end position="136"/>
    </location>
</feature>
<feature type="strand" evidence="10">
    <location>
        <begin position="142"/>
        <end position="145"/>
    </location>
</feature>
<feature type="helix" evidence="10">
    <location>
        <begin position="155"/>
        <end position="159"/>
    </location>
</feature>
<feature type="helix" evidence="10">
    <location>
        <begin position="164"/>
        <end position="166"/>
    </location>
</feature>
<feature type="helix" evidence="10">
    <location>
        <begin position="173"/>
        <end position="180"/>
    </location>
</feature>
<feature type="helix" evidence="10">
    <location>
        <begin position="189"/>
        <end position="201"/>
    </location>
</feature>
<feature type="strand" evidence="10">
    <location>
        <begin position="209"/>
        <end position="213"/>
    </location>
</feature>
<feature type="turn" evidence="10">
    <location>
        <begin position="217"/>
        <end position="219"/>
    </location>
</feature>
<feature type="helix" evidence="10">
    <location>
        <begin position="220"/>
        <end position="228"/>
    </location>
</feature>
<feature type="strand" evidence="10">
    <location>
        <begin position="233"/>
        <end position="235"/>
    </location>
</feature>
<feature type="strand" evidence="10">
    <location>
        <begin position="241"/>
        <end position="245"/>
    </location>
</feature>
<feature type="helix" evidence="10">
    <location>
        <begin position="251"/>
        <end position="259"/>
    </location>
</feature>
<feature type="strand" evidence="10">
    <location>
        <begin position="262"/>
        <end position="266"/>
    </location>
</feature>
<feature type="helix" evidence="10">
    <location>
        <begin position="276"/>
        <end position="278"/>
    </location>
</feature>
<feature type="strand" evidence="10">
    <location>
        <begin position="284"/>
        <end position="287"/>
    </location>
</feature>
<feature type="helix" evidence="10">
    <location>
        <begin position="309"/>
        <end position="312"/>
    </location>
</feature>
<feature type="turn" evidence="10">
    <location>
        <begin position="313"/>
        <end position="315"/>
    </location>
</feature>
<feature type="strand" evidence="10">
    <location>
        <begin position="317"/>
        <end position="319"/>
    </location>
</feature>
<feature type="strand" evidence="10">
    <location>
        <begin position="322"/>
        <end position="325"/>
    </location>
</feature>
<feature type="helix" evidence="10">
    <location>
        <begin position="326"/>
        <end position="342"/>
    </location>
</feature>
<evidence type="ECO:0000250" key="1">
    <source>
        <dbReference type="UniProtKB" id="D3ZUA0"/>
    </source>
</evidence>
<evidence type="ECO:0000250" key="2">
    <source>
        <dbReference type="UniProtKB" id="P13995"/>
    </source>
</evidence>
<evidence type="ECO:0000269" key="3">
    <source>
    </source>
</evidence>
<evidence type="ECO:0000303" key="4">
    <source>
    </source>
</evidence>
<evidence type="ECO:0000303" key="5">
    <source>
    </source>
</evidence>
<evidence type="ECO:0000303" key="6">
    <source>
    </source>
</evidence>
<evidence type="ECO:0000305" key="7"/>
<evidence type="ECO:0000305" key="8">
    <source>
    </source>
</evidence>
<evidence type="ECO:0000312" key="9">
    <source>
        <dbReference type="HGNC" id="HGNC:31865"/>
    </source>
</evidence>
<evidence type="ECO:0007829" key="10">
    <source>
        <dbReference type="PDB" id="7QEI"/>
    </source>
</evidence>
<reference key="1">
    <citation type="journal article" date="2005" name="Nature">
        <title>Generation and annotation of the DNA sequences of human chromosomes 2 and 4.</title>
        <authorList>
            <person name="Hillier L.W."/>
            <person name="Graves T.A."/>
            <person name="Fulton R.S."/>
            <person name="Fulton L.A."/>
            <person name="Pepin K.H."/>
            <person name="Minx P."/>
            <person name="Wagner-McPherson C."/>
            <person name="Layman D."/>
            <person name="Wylie K."/>
            <person name="Sekhon M."/>
            <person name="Becker M.C."/>
            <person name="Fewell G.A."/>
            <person name="Delehaunty K.D."/>
            <person name="Miner T.L."/>
            <person name="Nash W.E."/>
            <person name="Kremitzki C."/>
            <person name="Oddy L."/>
            <person name="Du H."/>
            <person name="Sun H."/>
            <person name="Bradshaw-Cordum H."/>
            <person name="Ali J."/>
            <person name="Carter J."/>
            <person name="Cordes M."/>
            <person name="Harris A."/>
            <person name="Isak A."/>
            <person name="van Brunt A."/>
            <person name="Nguyen C."/>
            <person name="Du F."/>
            <person name="Courtney L."/>
            <person name="Kalicki J."/>
            <person name="Ozersky P."/>
            <person name="Abbott S."/>
            <person name="Armstrong J."/>
            <person name="Belter E.A."/>
            <person name="Caruso L."/>
            <person name="Cedroni M."/>
            <person name="Cotton M."/>
            <person name="Davidson T."/>
            <person name="Desai A."/>
            <person name="Elliott G."/>
            <person name="Erb T."/>
            <person name="Fronick C."/>
            <person name="Gaige T."/>
            <person name="Haakenson W."/>
            <person name="Haglund K."/>
            <person name="Holmes A."/>
            <person name="Harkins R."/>
            <person name="Kim K."/>
            <person name="Kruchowski S.S."/>
            <person name="Strong C.M."/>
            <person name="Grewal N."/>
            <person name="Goyea E."/>
            <person name="Hou S."/>
            <person name="Levy A."/>
            <person name="Martinka S."/>
            <person name="Mead K."/>
            <person name="McLellan M.D."/>
            <person name="Meyer R."/>
            <person name="Randall-Maher J."/>
            <person name="Tomlinson C."/>
            <person name="Dauphin-Kohlberg S."/>
            <person name="Kozlowicz-Reilly A."/>
            <person name="Shah N."/>
            <person name="Swearengen-Shahid S."/>
            <person name="Snider J."/>
            <person name="Strong J.T."/>
            <person name="Thompson J."/>
            <person name="Yoakum M."/>
            <person name="Leonard S."/>
            <person name="Pearman C."/>
            <person name="Trani L."/>
            <person name="Radionenko M."/>
            <person name="Waligorski J.E."/>
            <person name="Wang C."/>
            <person name="Rock S.M."/>
            <person name="Tin-Wollam A.-M."/>
            <person name="Maupin R."/>
            <person name="Latreille P."/>
            <person name="Wendl M.C."/>
            <person name="Yang S.-P."/>
            <person name="Pohl C."/>
            <person name="Wallis J.W."/>
            <person name="Spieth J."/>
            <person name="Bieri T.A."/>
            <person name="Berkowicz N."/>
            <person name="Nelson J.O."/>
            <person name="Osborne J."/>
            <person name="Ding L."/>
            <person name="Meyer R."/>
            <person name="Sabo A."/>
            <person name="Shotland Y."/>
            <person name="Sinha P."/>
            <person name="Wohldmann P.E."/>
            <person name="Cook L.L."/>
            <person name="Hickenbotham M.T."/>
            <person name="Eldred J."/>
            <person name="Williams D."/>
            <person name="Jones T.A."/>
            <person name="She X."/>
            <person name="Ciccarelli F.D."/>
            <person name="Izaurralde E."/>
            <person name="Taylor J."/>
            <person name="Schmutz J."/>
            <person name="Myers R.M."/>
            <person name="Cox D.R."/>
            <person name="Huang X."/>
            <person name="McPherson J.D."/>
            <person name="Mardis E.R."/>
            <person name="Clifton S.W."/>
            <person name="Warren W.C."/>
            <person name="Chinwalla A.T."/>
            <person name="Eddy S.R."/>
            <person name="Marra M.A."/>
            <person name="Ovcharenko I."/>
            <person name="Furey T.S."/>
            <person name="Miller W."/>
            <person name="Eichler E.E."/>
            <person name="Bork P."/>
            <person name="Suyama M."/>
            <person name="Torrents D."/>
            <person name="Waterston R.H."/>
            <person name="Wilson R.K."/>
        </authorList>
    </citation>
    <scope>NUCLEOTIDE SEQUENCE [LARGE SCALE GENOMIC DNA]</scope>
</reference>
<reference key="2">
    <citation type="submission" date="2005-07" db="EMBL/GenBank/DDBJ databases">
        <authorList>
            <person name="Mural R.J."/>
            <person name="Istrail S."/>
            <person name="Sutton G.G."/>
            <person name="Florea L."/>
            <person name="Halpern A.L."/>
            <person name="Mobarry C.M."/>
            <person name="Lippert R."/>
            <person name="Walenz B."/>
            <person name="Shatkay H."/>
            <person name="Dew I."/>
            <person name="Miller J.R."/>
            <person name="Flanigan M.J."/>
            <person name="Edwards N.J."/>
            <person name="Bolanos R."/>
            <person name="Fasulo D."/>
            <person name="Halldorsson B.V."/>
            <person name="Hannenhalli S."/>
            <person name="Turner R."/>
            <person name="Yooseph S."/>
            <person name="Lu F."/>
            <person name="Nusskern D.R."/>
            <person name="Shue B.C."/>
            <person name="Zheng X.H."/>
            <person name="Zhong F."/>
            <person name="Delcher A.L."/>
            <person name="Huson D.H."/>
            <person name="Kravitz S.A."/>
            <person name="Mouchard L."/>
            <person name="Reinert K."/>
            <person name="Remington K.A."/>
            <person name="Clark A.G."/>
            <person name="Waterman M.S."/>
            <person name="Eichler E.E."/>
            <person name="Adams M.D."/>
            <person name="Hunkapiller M.W."/>
            <person name="Myers E.W."/>
            <person name="Venter J.C."/>
        </authorList>
    </citation>
    <scope>NUCLEOTIDE SEQUENCE [LARGE SCALE GENOMIC DNA]</scope>
</reference>
<reference key="3">
    <citation type="journal article" date="2004" name="Genome Res.">
        <title>The status, quality, and expansion of the NIH full-length cDNA project: the Mammalian Gene Collection (MGC).</title>
        <authorList>
            <consortium name="The MGC Project Team"/>
        </authorList>
    </citation>
    <scope>NUCLEOTIDE SEQUENCE [LARGE SCALE MRNA] (ISOFORMS 2 AND 3)</scope>
    <source>
        <tissue>Lung</tissue>
        <tissue>Testis</tissue>
    </source>
</reference>
<reference key="4">
    <citation type="submission" date="2003-10" db="EMBL/GenBank/DDBJ databases">
        <title>Regulation of human tetrahydrofolate dehydrogenase/cyclohydrolase.</title>
        <authorList>
            <person name="Liou J.R."/>
        </authorList>
    </citation>
    <scope>NUCLEOTIDE SEQUENCE [MRNA] OF 13-180 (ISOFORM 4)</scope>
</reference>
<reference key="5">
    <citation type="journal article" date="2004" name="Nat. Genet.">
        <title>Complete sequencing and characterization of 21,243 full-length human cDNAs.</title>
        <authorList>
            <person name="Ota T."/>
            <person name="Suzuki Y."/>
            <person name="Nishikawa T."/>
            <person name="Otsuki T."/>
            <person name="Sugiyama T."/>
            <person name="Irie R."/>
            <person name="Wakamatsu A."/>
            <person name="Hayashi K."/>
            <person name="Sato H."/>
            <person name="Nagai K."/>
            <person name="Kimura K."/>
            <person name="Makita H."/>
            <person name="Sekine M."/>
            <person name="Obayashi M."/>
            <person name="Nishi T."/>
            <person name="Shibahara T."/>
            <person name="Tanaka T."/>
            <person name="Ishii S."/>
            <person name="Yamamoto J."/>
            <person name="Saito K."/>
            <person name="Kawai Y."/>
            <person name="Isono Y."/>
            <person name="Nakamura Y."/>
            <person name="Nagahari K."/>
            <person name="Murakami K."/>
            <person name="Yasuda T."/>
            <person name="Iwayanagi T."/>
            <person name="Wagatsuma M."/>
            <person name="Shiratori A."/>
            <person name="Sudo H."/>
            <person name="Hosoiri T."/>
            <person name="Kaku Y."/>
            <person name="Kodaira H."/>
            <person name="Kondo H."/>
            <person name="Sugawara M."/>
            <person name="Takahashi M."/>
            <person name="Kanda K."/>
            <person name="Yokoi T."/>
            <person name="Furuya T."/>
            <person name="Kikkawa E."/>
            <person name="Omura Y."/>
            <person name="Abe K."/>
            <person name="Kamihara K."/>
            <person name="Katsuta N."/>
            <person name="Sato K."/>
            <person name="Tanikawa M."/>
            <person name="Yamazaki M."/>
            <person name="Ninomiya K."/>
            <person name="Ishibashi T."/>
            <person name="Yamashita H."/>
            <person name="Murakawa K."/>
            <person name="Fujimori K."/>
            <person name="Tanai H."/>
            <person name="Kimata M."/>
            <person name="Watanabe M."/>
            <person name="Hiraoka S."/>
            <person name="Chiba Y."/>
            <person name="Ishida S."/>
            <person name="Ono Y."/>
            <person name="Takiguchi S."/>
            <person name="Watanabe S."/>
            <person name="Yosida M."/>
            <person name="Hotuta T."/>
            <person name="Kusano J."/>
            <person name="Kanehori K."/>
            <person name="Takahashi-Fujii A."/>
            <person name="Hara H."/>
            <person name="Tanase T.-O."/>
            <person name="Nomura Y."/>
            <person name="Togiya S."/>
            <person name="Komai F."/>
            <person name="Hara R."/>
            <person name="Takeuchi K."/>
            <person name="Arita M."/>
            <person name="Imose N."/>
            <person name="Musashino K."/>
            <person name="Yuuki H."/>
            <person name="Oshima A."/>
            <person name="Sasaki N."/>
            <person name="Aotsuka S."/>
            <person name="Yoshikawa Y."/>
            <person name="Matsunawa H."/>
            <person name="Ichihara T."/>
            <person name="Shiohata N."/>
            <person name="Sano S."/>
            <person name="Moriya S."/>
            <person name="Momiyama H."/>
            <person name="Satoh N."/>
            <person name="Takami S."/>
            <person name="Terashima Y."/>
            <person name="Suzuki O."/>
            <person name="Nakagawa S."/>
            <person name="Senoh A."/>
            <person name="Mizoguchi H."/>
            <person name="Goto Y."/>
            <person name="Shimizu F."/>
            <person name="Wakebe H."/>
            <person name="Hishigaki H."/>
            <person name="Watanabe T."/>
            <person name="Sugiyama A."/>
            <person name="Takemoto M."/>
            <person name="Kawakami B."/>
            <person name="Yamazaki M."/>
            <person name="Watanabe K."/>
            <person name="Kumagai A."/>
            <person name="Itakura S."/>
            <person name="Fukuzumi Y."/>
            <person name="Fujimori Y."/>
            <person name="Komiyama M."/>
            <person name="Tashiro H."/>
            <person name="Tanigami A."/>
            <person name="Fujiwara T."/>
            <person name="Ono T."/>
            <person name="Yamada K."/>
            <person name="Fujii Y."/>
            <person name="Ozaki K."/>
            <person name="Hirao M."/>
            <person name="Ohmori Y."/>
            <person name="Kawabata A."/>
            <person name="Hikiji T."/>
            <person name="Kobatake N."/>
            <person name="Inagaki H."/>
            <person name="Ikema Y."/>
            <person name="Okamoto S."/>
            <person name="Okitani R."/>
            <person name="Kawakami T."/>
            <person name="Noguchi S."/>
            <person name="Itoh T."/>
            <person name="Shigeta K."/>
            <person name="Senba T."/>
            <person name="Matsumura K."/>
            <person name="Nakajima Y."/>
            <person name="Mizuno T."/>
            <person name="Morinaga M."/>
            <person name="Sasaki M."/>
            <person name="Togashi T."/>
            <person name="Oyama M."/>
            <person name="Hata H."/>
            <person name="Watanabe M."/>
            <person name="Komatsu T."/>
            <person name="Mizushima-Sugano J."/>
            <person name="Satoh T."/>
            <person name="Shirai Y."/>
            <person name="Takahashi Y."/>
            <person name="Nakagawa K."/>
            <person name="Okumura K."/>
            <person name="Nagase T."/>
            <person name="Nomura N."/>
            <person name="Kikuchi H."/>
            <person name="Masuho Y."/>
            <person name="Yamashita R."/>
            <person name="Nakai K."/>
            <person name="Yada T."/>
            <person name="Nakamura Y."/>
            <person name="Ohara O."/>
            <person name="Isogai T."/>
            <person name="Sugano S."/>
        </authorList>
    </citation>
    <scope>NUCLEOTIDE SEQUENCE [LARGE SCALE MRNA] OF 152-347 (ISOFORM 1)</scope>
    <source>
        <tissue>Teratocarcinoma</tissue>
    </source>
</reference>
<reference key="6">
    <citation type="journal article" date="2011" name="J. Biol. Chem.">
        <title>Mammalian MTHFD2L encodes a mitochondrial methylenetetrahydrofolate dehydrogenase isozyme expressed in adult tissues.</title>
        <authorList>
            <person name="Bolusani S."/>
            <person name="Young B.A."/>
            <person name="Cole N.A."/>
            <person name="Tibbetts A.S."/>
            <person name="Momb J."/>
            <person name="Bryant J.D."/>
            <person name="Solmonson A."/>
            <person name="Appling D.R."/>
        </authorList>
    </citation>
    <scope>ALTERNATIVE SPLICING (ISOFORMS 1; 4 AND 5)</scope>
    <scope>TISSUE SPECIFICITY</scope>
</reference>
<protein>
    <recommendedName>
        <fullName evidence="1">Bifunctional methylenetetrahydrofolate dehydrogenase/cyclohydrolase 2, mitochondrial</fullName>
    </recommendedName>
    <alternativeName>
        <fullName evidence="8">NADP-dependent methylenetetrahydrofolate dehydrogenase 2-like protein</fullName>
        <shortName evidence="6">MTHFD2-like</shortName>
    </alternativeName>
    <domain>
        <recommendedName>
            <fullName evidence="1">NAD-dependent methylenetetrahydrofolate dehydrogenase</fullName>
            <ecNumber evidence="1">1.5.1.15</ecNumber>
            <ecNumber evidence="1">1.5.1.5</ecNumber>
        </recommendedName>
    </domain>
    <domain>
        <recommendedName>
            <fullName evidence="1">Methenyltetrahydrofolate cyclohydrolase</fullName>
            <ecNumber evidence="1">3.5.4.9</ecNumber>
        </recommendedName>
    </domain>
</protein>
<dbReference type="EC" id="1.5.1.15" evidence="1"/>
<dbReference type="EC" id="1.5.1.5" evidence="1"/>
<dbReference type="EC" id="3.5.4.9" evidence="1"/>
<dbReference type="EMBL" id="AC093677">
    <property type="status" value="NOT_ANNOTATED_CDS"/>
    <property type="molecule type" value="Genomic_DNA"/>
</dbReference>
<dbReference type="EMBL" id="AC097470">
    <property type="status" value="NOT_ANNOTATED_CDS"/>
    <property type="molecule type" value="Genomic_DNA"/>
</dbReference>
<dbReference type="EMBL" id="CH471057">
    <property type="protein sequence ID" value="EAX05705.1"/>
    <property type="molecule type" value="Genomic_DNA"/>
</dbReference>
<dbReference type="EMBL" id="AX794779">
    <property type="status" value="NOT_ANNOTATED_CDS"/>
    <property type="molecule type" value="mRNA"/>
</dbReference>
<dbReference type="EMBL" id="BC032771">
    <property type="protein sequence ID" value="AAH32771.1"/>
    <property type="status" value="ALT_INIT"/>
    <property type="molecule type" value="mRNA"/>
</dbReference>
<dbReference type="EMBL" id="BC065771">
    <property type="protein sequence ID" value="AAH65771.1"/>
    <property type="molecule type" value="mRNA"/>
</dbReference>
<dbReference type="EMBL" id="AK023167">
    <property type="protein sequence ID" value="BAB14441.1"/>
    <property type="status" value="ALT_SEQ"/>
    <property type="molecule type" value="mRNA"/>
</dbReference>
<dbReference type="CCDS" id="CCDS47075.1">
    <molecule id="Q9H903-4"/>
</dbReference>
<dbReference type="RefSeq" id="NP_001004346.2">
    <molecule id="Q9H903-1"/>
    <property type="nucleotide sequence ID" value="NM_001004346.4"/>
</dbReference>
<dbReference type="RefSeq" id="NP_001138450.1">
    <molecule id="Q9H903-4"/>
    <property type="nucleotide sequence ID" value="NM_001144978.3"/>
</dbReference>
<dbReference type="RefSeq" id="XP_016863708.2">
    <molecule id="Q9H903-5"/>
    <property type="nucleotide sequence ID" value="XM_017008219.3"/>
</dbReference>
<dbReference type="RefSeq" id="XP_047271671.1">
    <molecule id="Q9H903-1"/>
    <property type="nucleotide sequence ID" value="XM_047415715.1"/>
</dbReference>
<dbReference type="RefSeq" id="XP_054206050.1">
    <molecule id="Q9H903-1"/>
    <property type="nucleotide sequence ID" value="XM_054350075.1"/>
</dbReference>
<dbReference type="PDB" id="7QEI">
    <property type="method" value="X-ray"/>
    <property type="resolution" value="2.10 A"/>
    <property type="chains" value="A=50-347"/>
</dbReference>
<dbReference type="PDBsum" id="7QEI"/>
<dbReference type="SMR" id="Q9H903"/>
<dbReference type="BioGRID" id="137092">
    <property type="interactions" value="18"/>
</dbReference>
<dbReference type="FunCoup" id="Q9H903">
    <property type="interactions" value="1382"/>
</dbReference>
<dbReference type="IntAct" id="Q9H903">
    <property type="interactions" value="16"/>
</dbReference>
<dbReference type="STRING" id="9606.ENSP00000379108"/>
<dbReference type="BindingDB" id="Q9H903"/>
<dbReference type="ChEMBL" id="CHEMBL4105963"/>
<dbReference type="iPTMnet" id="Q9H903"/>
<dbReference type="PhosphoSitePlus" id="Q9H903"/>
<dbReference type="BioMuta" id="MTHFD2L"/>
<dbReference type="DMDM" id="353526325"/>
<dbReference type="jPOST" id="Q9H903"/>
<dbReference type="MassIVE" id="Q9H903"/>
<dbReference type="PaxDb" id="9606-ENSP00000379108"/>
<dbReference type="PeptideAtlas" id="Q9H903"/>
<dbReference type="ProteomicsDB" id="81265">
    <molecule id="Q9H903-4"/>
</dbReference>
<dbReference type="ProteomicsDB" id="81266">
    <molecule id="Q9H903-1"/>
</dbReference>
<dbReference type="ProteomicsDB" id="81267">
    <molecule id="Q9H903-2"/>
</dbReference>
<dbReference type="ProteomicsDB" id="81268">
    <molecule id="Q9H903-3"/>
</dbReference>
<dbReference type="ProteomicsDB" id="81269">
    <molecule id="Q9H903-5"/>
</dbReference>
<dbReference type="Pumba" id="Q9H903"/>
<dbReference type="Antibodypedia" id="24601">
    <property type="antibodies" value="140 antibodies from 25 providers"/>
</dbReference>
<dbReference type="DNASU" id="441024"/>
<dbReference type="Ensembl" id="ENST00000325278.7">
    <molecule id="Q9H903-4"/>
    <property type="protein sequence ID" value="ENSP00000321984.7"/>
    <property type="gene ID" value="ENSG00000163738.19"/>
</dbReference>
<dbReference type="Ensembl" id="ENST00000395759.6">
    <molecule id="Q9H903-4"/>
    <property type="protein sequence ID" value="ENSP00000379108.2"/>
    <property type="gene ID" value="ENSG00000163738.19"/>
</dbReference>
<dbReference type="GeneID" id="441024"/>
<dbReference type="KEGG" id="hsa:441024"/>
<dbReference type="MANE-Select" id="ENST00000325278.7">
    <property type="protein sequence ID" value="ENSP00000321984.7"/>
    <property type="RefSeq nucleotide sequence ID" value="NM_001144978.3"/>
    <property type="RefSeq protein sequence ID" value="NP_001138450.1"/>
</dbReference>
<dbReference type="UCSC" id="uc011cbj.3">
    <molecule id="Q9H903-4"/>
    <property type="organism name" value="human"/>
</dbReference>
<dbReference type="AGR" id="HGNC:31865"/>
<dbReference type="CTD" id="441024"/>
<dbReference type="DisGeNET" id="441024"/>
<dbReference type="GeneCards" id="MTHFD2L"/>
<dbReference type="HGNC" id="HGNC:31865">
    <property type="gene designation" value="MTHFD2L"/>
</dbReference>
<dbReference type="HPA" id="ENSG00000163738">
    <property type="expression patterns" value="Tissue enhanced (liver)"/>
</dbReference>
<dbReference type="MIM" id="614047">
    <property type="type" value="gene"/>
</dbReference>
<dbReference type="neXtProt" id="NX_Q9H903"/>
<dbReference type="OpenTargets" id="ENSG00000163738"/>
<dbReference type="PharmGKB" id="PA134943916"/>
<dbReference type="VEuPathDB" id="HostDB:ENSG00000163738"/>
<dbReference type="eggNOG" id="KOG0089">
    <property type="taxonomic scope" value="Eukaryota"/>
</dbReference>
<dbReference type="GeneTree" id="ENSGT00940000160901"/>
<dbReference type="HOGENOM" id="CLU_034045_0_1_1"/>
<dbReference type="InParanoid" id="Q9H903"/>
<dbReference type="OrthoDB" id="5126881at2759"/>
<dbReference type="PAN-GO" id="Q9H903">
    <property type="GO annotations" value="5 GO annotations based on evolutionary models"/>
</dbReference>
<dbReference type="PhylomeDB" id="Q9H903"/>
<dbReference type="TreeFam" id="TF323998"/>
<dbReference type="BRENDA" id="1.5.1.15">
    <property type="organism ID" value="2681"/>
</dbReference>
<dbReference type="BRENDA" id="1.5.1.5">
    <property type="organism ID" value="2681"/>
</dbReference>
<dbReference type="BRENDA" id="3.5.4.9">
    <property type="organism ID" value="2681"/>
</dbReference>
<dbReference type="PathwayCommons" id="Q9H903"/>
<dbReference type="Reactome" id="R-HSA-196757">
    <property type="pathway name" value="Metabolism of folate and pterines"/>
</dbReference>
<dbReference type="SignaLink" id="Q9H903"/>
<dbReference type="SIGNOR" id="Q9H903"/>
<dbReference type="UniPathway" id="UPA00193"/>
<dbReference type="BioGRID-ORCS" id="441024">
    <property type="hits" value="19 hits in 1135 CRISPR screens"/>
</dbReference>
<dbReference type="CD-CODE" id="91857CE7">
    <property type="entry name" value="Nucleolus"/>
</dbReference>
<dbReference type="ChiTaRS" id="MTHFD2L">
    <property type="organism name" value="human"/>
</dbReference>
<dbReference type="GenomeRNAi" id="441024"/>
<dbReference type="Pharos" id="Q9H903">
    <property type="development level" value="Tbio"/>
</dbReference>
<dbReference type="PRO" id="PR:Q9H903"/>
<dbReference type="Proteomes" id="UP000005640">
    <property type="component" value="Chromosome 4"/>
</dbReference>
<dbReference type="RNAct" id="Q9H903">
    <property type="molecule type" value="protein"/>
</dbReference>
<dbReference type="Bgee" id="ENSG00000163738">
    <property type="expression patterns" value="Expressed in corpus epididymis and 167 other cell types or tissues"/>
</dbReference>
<dbReference type="ExpressionAtlas" id="Q9H903">
    <property type="expression patterns" value="baseline and differential"/>
</dbReference>
<dbReference type="GO" id="GO:0005743">
    <property type="term" value="C:mitochondrial inner membrane"/>
    <property type="evidence" value="ECO:0007669"/>
    <property type="project" value="UniProtKB-SubCell"/>
</dbReference>
<dbReference type="GO" id="GO:0005759">
    <property type="term" value="C:mitochondrial matrix"/>
    <property type="evidence" value="ECO:0000304"/>
    <property type="project" value="Reactome"/>
</dbReference>
<dbReference type="GO" id="GO:0005739">
    <property type="term" value="C:mitochondrion"/>
    <property type="evidence" value="ECO:0006056"/>
    <property type="project" value="FlyBase"/>
</dbReference>
<dbReference type="GO" id="GO:0004477">
    <property type="term" value="F:methenyltetrahydrofolate cyclohydrolase activity"/>
    <property type="evidence" value="ECO:0000250"/>
    <property type="project" value="UniProtKB"/>
</dbReference>
<dbReference type="GO" id="GO:0004487">
    <property type="term" value="F:methylenetetrahydrofolate dehydrogenase (NAD+) activity"/>
    <property type="evidence" value="ECO:0000250"/>
    <property type="project" value="UniProtKB"/>
</dbReference>
<dbReference type="GO" id="GO:0004488">
    <property type="term" value="F:methylenetetrahydrofolate dehydrogenase (NADP+) activity"/>
    <property type="evidence" value="ECO:0000250"/>
    <property type="project" value="UniProtKB"/>
</dbReference>
<dbReference type="GO" id="GO:0009256">
    <property type="term" value="P:10-formyltetrahydrofolate metabolic process"/>
    <property type="evidence" value="ECO:0007669"/>
    <property type="project" value="Ensembl"/>
</dbReference>
<dbReference type="GO" id="GO:0008652">
    <property type="term" value="P:amino acid biosynthetic process"/>
    <property type="evidence" value="ECO:0007669"/>
    <property type="project" value="UniProtKB-KW"/>
</dbReference>
<dbReference type="GO" id="GO:0046655">
    <property type="term" value="P:folic acid metabolic process"/>
    <property type="evidence" value="ECO:0000304"/>
    <property type="project" value="Reactome"/>
</dbReference>
<dbReference type="GO" id="GO:0006164">
    <property type="term" value="P:purine nucleotide biosynthetic process"/>
    <property type="evidence" value="ECO:0007669"/>
    <property type="project" value="UniProtKB-KW"/>
</dbReference>
<dbReference type="GO" id="GO:0035999">
    <property type="term" value="P:tetrahydrofolate interconversion"/>
    <property type="evidence" value="ECO:0000250"/>
    <property type="project" value="UniProtKB"/>
</dbReference>
<dbReference type="CDD" id="cd01080">
    <property type="entry name" value="NAD_bind_m-THF_DH_Cyclohyd"/>
    <property type="match status" value="1"/>
</dbReference>
<dbReference type="FunFam" id="3.40.50.10860:FF:000001">
    <property type="entry name" value="Bifunctional protein FolD"/>
    <property type="match status" value="1"/>
</dbReference>
<dbReference type="FunFam" id="3.40.50.720:FF:000070">
    <property type="entry name" value="probable bifunctional methylenetetrahydrofolate dehydrogenase/cyclohydrolase 2"/>
    <property type="match status" value="1"/>
</dbReference>
<dbReference type="Gene3D" id="3.40.50.10860">
    <property type="entry name" value="Leucine Dehydrogenase, chain A, domain 1"/>
    <property type="match status" value="1"/>
</dbReference>
<dbReference type="Gene3D" id="3.40.50.720">
    <property type="entry name" value="NAD(P)-binding Rossmann-like Domain"/>
    <property type="match status" value="1"/>
</dbReference>
<dbReference type="HAMAP" id="MF_01576">
    <property type="entry name" value="THF_DHG_CYH"/>
    <property type="match status" value="1"/>
</dbReference>
<dbReference type="InterPro" id="IPR046346">
    <property type="entry name" value="Aminoacid_DH-like_N_sf"/>
</dbReference>
<dbReference type="InterPro" id="IPR036291">
    <property type="entry name" value="NAD(P)-bd_dom_sf"/>
</dbReference>
<dbReference type="InterPro" id="IPR000672">
    <property type="entry name" value="THF_DH/CycHdrlase"/>
</dbReference>
<dbReference type="InterPro" id="IPR020630">
    <property type="entry name" value="THF_DH/CycHdrlase_cat_dom"/>
</dbReference>
<dbReference type="InterPro" id="IPR020867">
    <property type="entry name" value="THF_DH/CycHdrlase_CS"/>
</dbReference>
<dbReference type="InterPro" id="IPR020631">
    <property type="entry name" value="THF_DH/CycHdrlase_NAD-bd_dom"/>
</dbReference>
<dbReference type="PANTHER" id="PTHR48099:SF7">
    <property type="entry name" value="BIFUNCTIONAL METHYLENETETRAHYDROFOLATE DEHYDROGENASE_CYCLOHYDROLASE 2, MITOCHONDRIAL"/>
    <property type="match status" value="1"/>
</dbReference>
<dbReference type="PANTHER" id="PTHR48099">
    <property type="entry name" value="C-1-TETRAHYDROFOLATE SYNTHASE, CYTOPLASMIC-RELATED"/>
    <property type="match status" value="1"/>
</dbReference>
<dbReference type="Pfam" id="PF00763">
    <property type="entry name" value="THF_DHG_CYH"/>
    <property type="match status" value="1"/>
</dbReference>
<dbReference type="Pfam" id="PF02882">
    <property type="entry name" value="THF_DHG_CYH_C"/>
    <property type="match status" value="1"/>
</dbReference>
<dbReference type="PRINTS" id="PR00085">
    <property type="entry name" value="THFDHDRGNASE"/>
</dbReference>
<dbReference type="SUPFAM" id="SSF53223">
    <property type="entry name" value="Aminoacid dehydrogenase-like, N-terminal domain"/>
    <property type="match status" value="1"/>
</dbReference>
<dbReference type="SUPFAM" id="SSF51735">
    <property type="entry name" value="NAD(P)-binding Rossmann-fold domains"/>
    <property type="match status" value="1"/>
</dbReference>
<dbReference type="PROSITE" id="PS00767">
    <property type="entry name" value="THF_DHG_CYH_2"/>
    <property type="match status" value="1"/>
</dbReference>
<gene>
    <name evidence="9" type="primary">MTHFD2L</name>
</gene>
<proteinExistence type="evidence at protein level"/>
<comment type="function">
    <text evidence="1">Bifunctional mitochondrial folate-interconverting enzyme that has both NAD/NADP-dependent methylenetetrahydrofolate dehydrogenase and methenyltetrahydrofolate cyclohydrolase activities.</text>
</comment>
<comment type="catalytic activity">
    <reaction evidence="1">
        <text>(6R)-5,10-methylene-5,6,7,8-tetrahydrofolate + NAD(+) = (6R)-5,10-methenyltetrahydrofolate + NADH</text>
        <dbReference type="Rhea" id="RHEA:22892"/>
        <dbReference type="ChEBI" id="CHEBI:15636"/>
        <dbReference type="ChEBI" id="CHEBI:57455"/>
        <dbReference type="ChEBI" id="CHEBI:57540"/>
        <dbReference type="ChEBI" id="CHEBI:57945"/>
        <dbReference type="EC" id="1.5.1.15"/>
    </reaction>
</comment>
<comment type="catalytic activity">
    <reaction evidence="1">
        <text>(6R)-5,10-methenyltetrahydrofolate + H2O = (6R)-10-formyltetrahydrofolate + H(+)</text>
        <dbReference type="Rhea" id="RHEA:23700"/>
        <dbReference type="ChEBI" id="CHEBI:15377"/>
        <dbReference type="ChEBI" id="CHEBI:15378"/>
        <dbReference type="ChEBI" id="CHEBI:57455"/>
        <dbReference type="ChEBI" id="CHEBI:195366"/>
        <dbReference type="EC" id="3.5.4.9"/>
    </reaction>
</comment>
<comment type="catalytic activity">
    <reaction evidence="1">
        <text>(6R)-5,10-methylene-5,6,7,8-tetrahydrofolate + NADP(+) = (6R)-5,10-methenyltetrahydrofolate + NADPH</text>
        <dbReference type="Rhea" id="RHEA:22812"/>
        <dbReference type="ChEBI" id="CHEBI:15636"/>
        <dbReference type="ChEBI" id="CHEBI:57455"/>
        <dbReference type="ChEBI" id="CHEBI:57783"/>
        <dbReference type="ChEBI" id="CHEBI:58349"/>
        <dbReference type="EC" id="1.5.1.5"/>
    </reaction>
</comment>
<comment type="cofactor">
    <cofactor evidence="1">
        <name>Mg(2+)</name>
        <dbReference type="ChEBI" id="CHEBI:18420"/>
    </cofactor>
</comment>
<comment type="pathway">
    <text evidence="1">One-carbon metabolism; tetrahydrofolate interconversion.</text>
</comment>
<comment type="interaction">
    <interactant intactId="EBI-15012270">
        <id>Q9H903</id>
    </interactant>
    <interactant intactId="EBI-745201">
        <id>Q9BSH5</id>
        <label>HDHD3</label>
    </interactant>
    <organismsDiffer>false</organismsDiffer>
    <experiments>2</experiments>
</comment>
<comment type="interaction">
    <interactant intactId="EBI-14202147">
        <id>Q9H903-3</id>
    </interactant>
    <interactant intactId="EBI-741158">
        <id>Q96HA8</id>
        <label>NTAQ1</label>
    </interactant>
    <organismsDiffer>false</organismsDiffer>
    <experiments>3</experiments>
</comment>
<comment type="subcellular location">
    <subcellularLocation>
        <location evidence="1">Mitochondrion inner membrane</location>
        <topology evidence="1">Peripheral membrane protein</topology>
        <orientation evidence="1">Matrix side</orientation>
    </subcellularLocation>
</comment>
<comment type="alternative products">
    <event type="alternative splicing"/>
    <isoform>
        <id>Q9H903-4</id>
        <name>4</name>
        <sequence type="displayed"/>
    </isoform>
    <isoform>
        <id>Q9H903-1</id>
        <name>1</name>
        <sequence type="described" ref="VSP_041878"/>
    </isoform>
    <isoform>
        <id>Q9H903-2</id>
        <name>2</name>
        <sequence type="described" ref="VSP_041877"/>
    </isoform>
    <isoform>
        <id>Q9H903-3</id>
        <name>3</name>
        <sequence type="described" ref="VSP_041878 VSP_041880 VSP_041881"/>
    </isoform>
    <isoform>
        <id>Q9H903-5</id>
        <name>5</name>
        <sequence type="described" ref="VSP_041879"/>
    </isoform>
</comment>
<comment type="tissue specificity">
    <text evidence="3">Isoform 1, isoform 4 and isoform 5 are expressed in brain and placenta.</text>
</comment>
<comment type="similarity">
    <text evidence="7">Belongs to the tetrahydrofolate dehydrogenase/cyclohydrolase family.</text>
</comment>
<comment type="sequence caution" evidence="7">
    <conflict type="erroneous initiation">
        <sequence resource="EMBL-CDS" id="AAH32771"/>
    </conflict>
    <text>Truncated N-terminus.</text>
</comment>
<comment type="sequence caution" evidence="7">
    <conflict type="miscellaneous discrepancy">
        <sequence resource="EMBL-CDS" id="BAB14441"/>
    </conflict>
    <text>Contaminating sequence. Sequence of unknown origin in the N-terminal part.</text>
</comment>
<keyword id="KW-0002">3D-structure</keyword>
<keyword id="KW-0025">Alternative splicing</keyword>
<keyword id="KW-0028">Amino-acid biosynthesis</keyword>
<keyword id="KW-0368">Histidine biosynthesis</keyword>
<keyword id="KW-0378">Hydrolase</keyword>
<keyword id="KW-0460">Magnesium</keyword>
<keyword id="KW-0472">Membrane</keyword>
<keyword id="KW-0486">Methionine biosynthesis</keyword>
<keyword id="KW-0496">Mitochondrion</keyword>
<keyword id="KW-0999">Mitochondrion inner membrane</keyword>
<keyword id="KW-0511">Multifunctional enzyme</keyword>
<keyword id="KW-0520">NAD</keyword>
<keyword id="KW-0554">One-carbon metabolism</keyword>
<keyword id="KW-0560">Oxidoreductase</keyword>
<keyword id="KW-1267">Proteomics identification</keyword>
<keyword id="KW-0658">Purine biosynthesis</keyword>
<keyword id="KW-1185">Reference proteome</keyword>
<sequence length="347" mass="37315">MTVPVRGFSLLRGRLGRAPALGRSTAPSVRAPGEPGSAFRGFRSSGVRHEAIIISGTEMAKHIQKEIQRGVESWVSLGNRRPHLSIILVGDNPASHTYVRNKIRAASAVGICSELILKPKDVSQEELLDVTDQLNMDPRVSGILVQLPLPDHVDERTICNGIAPEKDVDGFHIINIGRLCLDQHSLIPATASAVWEIIKRTGIQTFGKNVVVAGRSKNVGMPIAMLLHTDGEHERPGGDATVTIAHRYTPKEQLKIHTQLADIIIVAAGIPKLITSDMVKEGAAVIDVGINYVHDPVTGKTKLVGDVDFEAVKKKAGFITPVPGGVGPMTVAMLLKNTLLAAKKIIY</sequence>
<name>MTD2L_HUMAN</name>
<organism>
    <name type="scientific">Homo sapiens</name>
    <name type="common">Human</name>
    <dbReference type="NCBI Taxonomy" id="9606"/>
    <lineage>
        <taxon>Eukaryota</taxon>
        <taxon>Metazoa</taxon>
        <taxon>Chordata</taxon>
        <taxon>Craniata</taxon>
        <taxon>Vertebrata</taxon>
        <taxon>Euteleostomi</taxon>
        <taxon>Mammalia</taxon>
        <taxon>Eutheria</taxon>
        <taxon>Euarchontoglires</taxon>
        <taxon>Primates</taxon>
        <taxon>Haplorrhini</taxon>
        <taxon>Catarrhini</taxon>
        <taxon>Hominidae</taxon>
        <taxon>Homo</taxon>
    </lineage>
</organism>
<accession>Q9H903</accession>
<accession>Q6P079</accession>
<accession>Q8N560</accession>